<evidence type="ECO:0000250" key="1"/>
<evidence type="ECO:0000250" key="2">
    <source>
        <dbReference type="UniProtKB" id="P82319"/>
    </source>
</evidence>
<evidence type="ECO:0000255" key="3"/>
<evidence type="ECO:0000269" key="4">
    <source>
    </source>
</evidence>
<comment type="function">
    <text evidence="4">Has antibacterial activity against the Gram-negative bacterium E.coli and the Gram-positive bacteria L.monocytogenes and S.aureus. Has antifungal activity against C.albicans.</text>
</comment>
<comment type="subcellular location">
    <subcellularLocation>
        <location>Secreted</location>
    </subcellularLocation>
</comment>
<comment type="mass spectrometry" mass="3939.0" error="1.0" method="MALDI" evidence="4">
    <molecule>Defensin-1</molecule>
</comment>
<comment type="mass spectrometry" mass="3781.0" error="1.0" method="MALDI" evidence="4">
    <molecule>Defensin-2</molecule>
</comment>
<comment type="similarity">
    <text evidence="3">Belongs to the alpha-defensin family.</text>
</comment>
<reference key="1">
    <citation type="journal article" date="2006" name="Biochemistry (Mosc.)">
        <title>Alpha-defensins from blood leukocytes of the monkey Papio hamadryas.</title>
        <authorList>
            <person name="Tsvetkova E.V."/>
            <person name="Aleshina G.M."/>
            <person name="Shamova O.V."/>
            <person name="Leonova L.E."/>
            <person name="Lehrer R.I."/>
            <person name="Kokryakov V.N."/>
        </authorList>
    </citation>
    <scope>PROTEIN SEQUENCE</scope>
    <scope>FUNCTION</scope>
    <scope>MASS SPECTROMETRY</scope>
    <source>
        <tissue>Leukocyte</tissue>
    </source>
</reference>
<keyword id="KW-0044">Antibiotic</keyword>
<keyword id="KW-0929">Antimicrobial</keyword>
<keyword id="KW-0211">Defensin</keyword>
<keyword id="KW-0903">Direct protein sequencing</keyword>
<keyword id="KW-1015">Disulfide bond</keyword>
<keyword id="KW-0295">Fungicide</keyword>
<keyword id="KW-0964">Secreted</keyword>
<proteinExistence type="evidence at protein level"/>
<protein>
    <recommendedName>
        <fullName>Defensin-1</fullName>
    </recommendedName>
    <alternativeName>
        <fullName>PhD1</fullName>
    </alternativeName>
    <component>
        <recommendedName>
            <fullName>Defensin-2</fullName>
        </recommendedName>
        <alternativeName>
            <fullName>PhD2</fullName>
        </alternativeName>
    </component>
</protein>
<organism>
    <name type="scientific">Papio hamadryas</name>
    <name type="common">Hamadryas baboon</name>
    <dbReference type="NCBI Taxonomy" id="9557"/>
    <lineage>
        <taxon>Eukaryota</taxon>
        <taxon>Metazoa</taxon>
        <taxon>Chordata</taxon>
        <taxon>Craniata</taxon>
        <taxon>Vertebrata</taxon>
        <taxon>Euteleostomi</taxon>
        <taxon>Mammalia</taxon>
        <taxon>Eutheria</taxon>
        <taxon>Euarchontoglires</taxon>
        <taxon>Primates</taxon>
        <taxon>Haplorrhini</taxon>
        <taxon>Catarrhini</taxon>
        <taxon>Cercopithecidae</taxon>
        <taxon>Cercopithecinae</taxon>
        <taxon>Papio</taxon>
    </lineage>
</organism>
<accession>P84757</accession>
<name>DEF1_PAPHA</name>
<sequence length="33" mass="3943">RRICRCRIGRCLGLEVYFGVCFLHGRLARRCCR</sequence>
<dbReference type="SMR" id="P84757"/>
<dbReference type="GO" id="GO:0005576">
    <property type="term" value="C:extracellular region"/>
    <property type="evidence" value="ECO:0007669"/>
    <property type="project" value="UniProtKB-SubCell"/>
</dbReference>
<dbReference type="GO" id="GO:0042742">
    <property type="term" value="P:defense response to bacterium"/>
    <property type="evidence" value="ECO:0007669"/>
    <property type="project" value="UniProtKB-KW"/>
</dbReference>
<dbReference type="GO" id="GO:0050832">
    <property type="term" value="P:defense response to fungus"/>
    <property type="evidence" value="ECO:0007669"/>
    <property type="project" value="UniProtKB-KW"/>
</dbReference>
<dbReference type="GO" id="GO:0031640">
    <property type="term" value="P:killing of cells of another organism"/>
    <property type="evidence" value="ECO:0007669"/>
    <property type="project" value="UniProtKB-KW"/>
</dbReference>
<dbReference type="InterPro" id="IPR006081">
    <property type="entry name" value="Alpha-defensin_C"/>
</dbReference>
<dbReference type="SUPFAM" id="SSF57392">
    <property type="entry name" value="Defensin-like"/>
    <property type="match status" value="1"/>
</dbReference>
<dbReference type="PROSITE" id="PS00269">
    <property type="entry name" value="DEFENSIN"/>
    <property type="match status" value="1"/>
</dbReference>
<feature type="peptide" id="PRO_0000046065" description="Defensin-1">
    <location>
        <begin position="1"/>
        <end position="33"/>
    </location>
</feature>
<feature type="peptide" id="PRO_0000046066" description="Defensin-2">
    <location>
        <begin position="2"/>
        <end position="33"/>
    </location>
</feature>
<feature type="disulfide bond" evidence="1">
    <location>
        <begin position="4"/>
        <end position="32"/>
    </location>
</feature>
<feature type="disulfide bond" evidence="2">
    <location>
        <begin position="6"/>
        <end position="21"/>
    </location>
</feature>
<feature type="disulfide bond" evidence="1">
    <location>
        <begin position="11"/>
        <end position="31"/>
    </location>
</feature>